<accession>Q9M3C6</accession>
<name>PSA3C_ARATH</name>
<organism>
    <name type="scientific">Arabidopsis thaliana</name>
    <name type="common">Mouse-ear cress</name>
    <dbReference type="NCBI Taxonomy" id="3702"/>
    <lineage>
        <taxon>Eukaryota</taxon>
        <taxon>Viridiplantae</taxon>
        <taxon>Streptophyta</taxon>
        <taxon>Embryophyta</taxon>
        <taxon>Tracheophyta</taxon>
        <taxon>Spermatophyta</taxon>
        <taxon>Magnoliopsida</taxon>
        <taxon>eudicotyledons</taxon>
        <taxon>Gunneridae</taxon>
        <taxon>Pentapetalae</taxon>
        <taxon>rosids</taxon>
        <taxon>malvids</taxon>
        <taxon>Brassicales</taxon>
        <taxon>Brassicaceae</taxon>
        <taxon>Camelineae</taxon>
        <taxon>Arabidopsis</taxon>
    </lineage>
</organism>
<comment type="function">
    <text evidence="3">Nuclear genome-encoded factor required for the accumulation of photosystem I (PSI). Functions as a PSI biogenesis factor. Cooperates with PYG7 to promote the stable assembly of PSI in the thylakoid membrane. May target primarily the PsaC subunit. Does not seem to be required for the expression of chloroplast genes encoding PSI subunits.</text>
</comment>
<comment type="subunit">
    <text evidence="3">Interacts with PYG7.</text>
</comment>
<comment type="subcellular location">
    <subcellularLocation>
        <location evidence="3">Plastid</location>
        <location evidence="3">Chloroplast</location>
    </subcellularLocation>
    <subcellularLocation>
        <location evidence="1">Plastid</location>
        <location evidence="1">Chloroplast thylakoid membrane</location>
        <topology evidence="1">Peripheral membrane protein</topology>
    </subcellularLocation>
    <text evidence="1">Associates with the stromal face of the thylakoid membrane.</text>
</comment>
<comment type="disruption phenotype">
    <text evidence="3">Seedling lethality when homozygous. Pale green and slow growing phenotype when grown on MS medium supplemented with 2% sucrose.</text>
</comment>
<reference key="1">
    <citation type="submission" date="2002-11" db="EMBL/GenBank/DDBJ databases">
        <title>AtCHoR, a novel calcium homeostasis regulator in plants.</title>
        <authorList>
            <person name="Lohse M.-A."/>
            <person name="Schneider A."/>
            <person name="Mueller-Roeber B."/>
        </authorList>
    </citation>
    <scope>NUCLEOTIDE SEQUENCE [MRNA]</scope>
</reference>
<reference key="2">
    <citation type="journal article" date="2000" name="Nature">
        <title>Sequence and analysis of chromosome 3 of the plant Arabidopsis thaliana.</title>
        <authorList>
            <person name="Salanoubat M."/>
            <person name="Lemcke K."/>
            <person name="Rieger M."/>
            <person name="Ansorge W."/>
            <person name="Unseld M."/>
            <person name="Fartmann B."/>
            <person name="Valle G."/>
            <person name="Bloecker H."/>
            <person name="Perez-Alonso M."/>
            <person name="Obermaier B."/>
            <person name="Delseny M."/>
            <person name="Boutry M."/>
            <person name="Grivell L.A."/>
            <person name="Mache R."/>
            <person name="Puigdomenech P."/>
            <person name="De Simone V."/>
            <person name="Choisne N."/>
            <person name="Artiguenave F."/>
            <person name="Robert C."/>
            <person name="Brottier P."/>
            <person name="Wincker P."/>
            <person name="Cattolico L."/>
            <person name="Weissenbach J."/>
            <person name="Saurin W."/>
            <person name="Quetier F."/>
            <person name="Schaefer M."/>
            <person name="Mueller-Auer S."/>
            <person name="Gabel C."/>
            <person name="Fuchs M."/>
            <person name="Benes V."/>
            <person name="Wurmbach E."/>
            <person name="Drzonek H."/>
            <person name="Erfle H."/>
            <person name="Jordan N."/>
            <person name="Bangert S."/>
            <person name="Wiedelmann R."/>
            <person name="Kranz H."/>
            <person name="Voss H."/>
            <person name="Holland R."/>
            <person name="Brandt P."/>
            <person name="Nyakatura G."/>
            <person name="Vezzi A."/>
            <person name="D'Angelo M."/>
            <person name="Pallavicini A."/>
            <person name="Toppo S."/>
            <person name="Simionati B."/>
            <person name="Conrad A."/>
            <person name="Hornischer K."/>
            <person name="Kauer G."/>
            <person name="Loehnert T.-H."/>
            <person name="Nordsiek G."/>
            <person name="Reichelt J."/>
            <person name="Scharfe M."/>
            <person name="Schoen O."/>
            <person name="Bargues M."/>
            <person name="Terol J."/>
            <person name="Climent J."/>
            <person name="Navarro P."/>
            <person name="Collado C."/>
            <person name="Perez-Perez A."/>
            <person name="Ottenwaelder B."/>
            <person name="Duchemin D."/>
            <person name="Cooke R."/>
            <person name="Laudie M."/>
            <person name="Berger-Llauro C."/>
            <person name="Purnelle B."/>
            <person name="Masuy D."/>
            <person name="de Haan M."/>
            <person name="Maarse A.C."/>
            <person name="Alcaraz J.-P."/>
            <person name="Cottet A."/>
            <person name="Casacuberta E."/>
            <person name="Monfort A."/>
            <person name="Argiriou A."/>
            <person name="Flores M."/>
            <person name="Liguori R."/>
            <person name="Vitale D."/>
            <person name="Mannhaupt G."/>
            <person name="Haase D."/>
            <person name="Schoof H."/>
            <person name="Rudd S."/>
            <person name="Zaccaria P."/>
            <person name="Mewes H.-W."/>
            <person name="Mayer K.F.X."/>
            <person name="Kaul S."/>
            <person name="Town C.D."/>
            <person name="Koo H.L."/>
            <person name="Tallon L.J."/>
            <person name="Jenkins J."/>
            <person name="Rooney T."/>
            <person name="Rizzo M."/>
            <person name="Walts A."/>
            <person name="Utterback T."/>
            <person name="Fujii C.Y."/>
            <person name="Shea T.P."/>
            <person name="Creasy T.H."/>
            <person name="Haas B."/>
            <person name="Maiti R."/>
            <person name="Wu D."/>
            <person name="Peterson J."/>
            <person name="Van Aken S."/>
            <person name="Pai G."/>
            <person name="Militscher J."/>
            <person name="Sellers P."/>
            <person name="Gill J.E."/>
            <person name="Feldblyum T.V."/>
            <person name="Preuss D."/>
            <person name="Lin X."/>
            <person name="Nierman W.C."/>
            <person name="Salzberg S.L."/>
            <person name="White O."/>
            <person name="Venter J.C."/>
            <person name="Fraser C.M."/>
            <person name="Kaneko T."/>
            <person name="Nakamura Y."/>
            <person name="Sato S."/>
            <person name="Kato T."/>
            <person name="Asamizu E."/>
            <person name="Sasamoto S."/>
            <person name="Kimura T."/>
            <person name="Idesawa K."/>
            <person name="Kawashima K."/>
            <person name="Kishida Y."/>
            <person name="Kiyokawa C."/>
            <person name="Kohara M."/>
            <person name="Matsumoto M."/>
            <person name="Matsuno A."/>
            <person name="Muraki A."/>
            <person name="Nakayama S."/>
            <person name="Nakazaki N."/>
            <person name="Shinpo S."/>
            <person name="Takeuchi C."/>
            <person name="Wada T."/>
            <person name="Watanabe A."/>
            <person name="Yamada M."/>
            <person name="Yasuda M."/>
            <person name="Tabata S."/>
        </authorList>
    </citation>
    <scope>NUCLEOTIDE SEQUENCE [LARGE SCALE GENOMIC DNA]</scope>
    <source>
        <strain>cv. Columbia</strain>
    </source>
</reference>
<reference key="3">
    <citation type="journal article" date="2017" name="Plant J.">
        <title>Araport11: a complete reannotation of the Arabidopsis thaliana reference genome.</title>
        <authorList>
            <person name="Cheng C.Y."/>
            <person name="Krishnakumar V."/>
            <person name="Chan A.P."/>
            <person name="Thibaud-Nissen F."/>
            <person name="Schobel S."/>
            <person name="Town C.D."/>
        </authorList>
    </citation>
    <scope>GENOME REANNOTATION</scope>
    <source>
        <strain>cv. Columbia</strain>
    </source>
</reference>
<reference key="4">
    <citation type="journal article" date="2003" name="Science">
        <title>Empirical analysis of transcriptional activity in the Arabidopsis genome.</title>
        <authorList>
            <person name="Yamada K."/>
            <person name="Lim J."/>
            <person name="Dale J.M."/>
            <person name="Chen H."/>
            <person name="Shinn P."/>
            <person name="Palm C.J."/>
            <person name="Southwick A.M."/>
            <person name="Wu H.C."/>
            <person name="Kim C.J."/>
            <person name="Nguyen M."/>
            <person name="Pham P.K."/>
            <person name="Cheuk R.F."/>
            <person name="Karlin-Newmann G."/>
            <person name="Liu S.X."/>
            <person name="Lam B."/>
            <person name="Sakano H."/>
            <person name="Wu T."/>
            <person name="Yu G."/>
            <person name="Miranda M."/>
            <person name="Quach H.L."/>
            <person name="Tripp M."/>
            <person name="Chang C.H."/>
            <person name="Lee J.M."/>
            <person name="Toriumi M.J."/>
            <person name="Chan M.M."/>
            <person name="Tang C.C."/>
            <person name="Onodera C.S."/>
            <person name="Deng J.M."/>
            <person name="Akiyama K."/>
            <person name="Ansari Y."/>
            <person name="Arakawa T."/>
            <person name="Banh J."/>
            <person name="Banno F."/>
            <person name="Bowser L."/>
            <person name="Brooks S.Y."/>
            <person name="Carninci P."/>
            <person name="Chao Q."/>
            <person name="Choy N."/>
            <person name="Enju A."/>
            <person name="Goldsmith A.D."/>
            <person name="Gurjal M."/>
            <person name="Hansen N.F."/>
            <person name="Hayashizaki Y."/>
            <person name="Johnson-Hopson C."/>
            <person name="Hsuan V.W."/>
            <person name="Iida K."/>
            <person name="Karnes M."/>
            <person name="Khan S."/>
            <person name="Koesema E."/>
            <person name="Ishida J."/>
            <person name="Jiang P.X."/>
            <person name="Jones T."/>
            <person name="Kawai J."/>
            <person name="Kamiya A."/>
            <person name="Meyers C."/>
            <person name="Nakajima M."/>
            <person name="Narusaka M."/>
            <person name="Seki M."/>
            <person name="Sakurai T."/>
            <person name="Satou M."/>
            <person name="Tamse R."/>
            <person name="Vaysberg M."/>
            <person name="Wallender E.K."/>
            <person name="Wong C."/>
            <person name="Yamamura Y."/>
            <person name="Yuan S."/>
            <person name="Shinozaki K."/>
            <person name="Davis R.W."/>
            <person name="Theologis A."/>
            <person name="Ecker J.R."/>
        </authorList>
    </citation>
    <scope>NUCLEOTIDE SEQUENCE [LARGE SCALE MRNA]</scope>
    <source>
        <strain>cv. Columbia</strain>
    </source>
</reference>
<reference key="5">
    <citation type="journal article" date="2017" name="Plant Physiol.">
        <title>PSA3, a protein on the stromal face of the thylakoid membrane, promotes photosystem I accumulation in cooperation with the assembly factor PYG7.</title>
        <authorList>
            <person name="Shen J."/>
            <person name="Williams-Carrier R."/>
            <person name="Barkan A."/>
        </authorList>
    </citation>
    <scope>FUNCTION</scope>
    <scope>INTERACTION WITH PYG7</scope>
    <scope>SUBCELLULAR LOCATION</scope>
    <scope>DISRUPTION PHENOTYPE</scope>
</reference>
<gene>
    <name evidence="4" type="primary">PSA3</name>
    <name evidence="5" type="synonym">PDE329</name>
    <name evidence="6 7" type="ordered locus">At3g55250</name>
    <name evidence="8" type="ORF">T26I12.130</name>
</gene>
<feature type="transit peptide" description="Chloroplast" evidence="2">
    <location>
        <begin position="1"/>
        <end position="45"/>
    </location>
</feature>
<feature type="chain" id="PRO_0000440979" description="Photosystem I assembly factor PSA3, chloroplastic">
    <location>
        <begin position="46"/>
        <end position="277"/>
    </location>
</feature>
<keyword id="KW-0150">Chloroplast</keyword>
<keyword id="KW-0472">Membrane</keyword>
<keyword id="KW-0934">Plastid</keyword>
<keyword id="KW-1185">Reference proteome</keyword>
<keyword id="KW-0793">Thylakoid</keyword>
<keyword id="KW-0809">Transit peptide</keyword>
<evidence type="ECO:0000250" key="1">
    <source>
        <dbReference type="UniProtKB" id="B4FSG1"/>
    </source>
</evidence>
<evidence type="ECO:0000255" key="2"/>
<evidence type="ECO:0000269" key="3">
    <source>
    </source>
</evidence>
<evidence type="ECO:0000303" key="4">
    <source>
    </source>
</evidence>
<evidence type="ECO:0000305" key="5"/>
<evidence type="ECO:0000312" key="6">
    <source>
        <dbReference type="Araport" id="AT3G55250"/>
    </source>
</evidence>
<evidence type="ECO:0000312" key="7">
    <source>
        <dbReference type="EMBL" id="AAM20644.1"/>
    </source>
</evidence>
<evidence type="ECO:0000312" key="8">
    <source>
        <dbReference type="EMBL" id="CAB75759.1"/>
    </source>
</evidence>
<sequence>MVVVTHISTSFHQISPSFFHLRLRNPSTTSSSRPKLDGGFALSIRAYIEKPNSFSTFANKVIGSLPVIGLLARIISDEGGVGRDLVDFAEFRKRVGNKCTPDDSRAFYEFQQRRGKAGEPLYVLLCCWVAAVGAGLLKSEEILEGVTRVSISNDLEFEEQNFIALMTEARQRRAKLNIDAPTIPMELRVEKALEGIYACCFRRGLIEEEDEKLLKVMLIAVFPSVEKSEIERIIKEKATRVEEGGEEENVMAKRLPKEAIQMQMKDLEFLQQQNIES</sequence>
<protein>
    <recommendedName>
        <fullName evidence="5">Photosystem I assembly factor PSA3, chloroplastic</fullName>
    </recommendedName>
    <alternativeName>
        <fullName evidence="4">Protein PHOTOSYSTEM I ASSEMBLY 3</fullName>
    </alternativeName>
    <alternativeName>
        <fullName evidence="5">Protein PIGMENT DEFECTIVE 329</fullName>
    </alternativeName>
</protein>
<dbReference type="EMBL" id="AY173126">
    <property type="protein sequence ID" value="AAO43936.1"/>
    <property type="molecule type" value="mRNA"/>
</dbReference>
<dbReference type="EMBL" id="AL132954">
    <property type="protein sequence ID" value="CAB75759.1"/>
    <property type="molecule type" value="Genomic_DNA"/>
</dbReference>
<dbReference type="EMBL" id="CP002686">
    <property type="protein sequence ID" value="AEE79357.1"/>
    <property type="molecule type" value="Genomic_DNA"/>
</dbReference>
<dbReference type="EMBL" id="AY099793">
    <property type="protein sequence ID" value="AAM20644.1"/>
    <property type="molecule type" value="mRNA"/>
</dbReference>
<dbReference type="EMBL" id="AY128909">
    <property type="protein sequence ID" value="AAM91309.1"/>
    <property type="molecule type" value="mRNA"/>
</dbReference>
<dbReference type="PIR" id="T47664">
    <property type="entry name" value="T47664"/>
</dbReference>
<dbReference type="RefSeq" id="NP_191085.1">
    <property type="nucleotide sequence ID" value="NM_115383.3"/>
</dbReference>
<dbReference type="SMR" id="Q9M3C6"/>
<dbReference type="FunCoup" id="Q9M3C6">
    <property type="interactions" value="1942"/>
</dbReference>
<dbReference type="STRING" id="3702.Q9M3C6"/>
<dbReference type="MetOSite" id="Q9M3C6"/>
<dbReference type="PaxDb" id="3702-AT3G55250.1"/>
<dbReference type="ProteomicsDB" id="226385"/>
<dbReference type="EnsemblPlants" id="AT3G55250.1">
    <property type="protein sequence ID" value="AT3G55250.1"/>
    <property type="gene ID" value="AT3G55250"/>
</dbReference>
<dbReference type="GeneID" id="824691"/>
<dbReference type="Gramene" id="AT3G55250.1">
    <property type="protein sequence ID" value="AT3G55250.1"/>
    <property type="gene ID" value="AT3G55250"/>
</dbReference>
<dbReference type="KEGG" id="ath:AT3G55250"/>
<dbReference type="Araport" id="AT3G55250"/>
<dbReference type="TAIR" id="AT3G55250">
    <property type="gene designation" value="PDE329"/>
</dbReference>
<dbReference type="eggNOG" id="ENOG502QUQN">
    <property type="taxonomic scope" value="Eukaryota"/>
</dbReference>
<dbReference type="HOGENOM" id="CLU_078970_0_0_1"/>
<dbReference type="InParanoid" id="Q9M3C6"/>
<dbReference type="OMA" id="ETFIAMM"/>
<dbReference type="PhylomeDB" id="Q9M3C6"/>
<dbReference type="PRO" id="PR:Q9M3C6"/>
<dbReference type="Proteomes" id="UP000006548">
    <property type="component" value="Chromosome 3"/>
</dbReference>
<dbReference type="ExpressionAtlas" id="Q9M3C6">
    <property type="expression patterns" value="baseline and differential"/>
</dbReference>
<dbReference type="GO" id="GO:0009507">
    <property type="term" value="C:chloroplast"/>
    <property type="evidence" value="ECO:0007005"/>
    <property type="project" value="TAIR"/>
</dbReference>
<dbReference type="GO" id="GO:0009941">
    <property type="term" value="C:chloroplast envelope"/>
    <property type="evidence" value="ECO:0007005"/>
    <property type="project" value="TAIR"/>
</dbReference>
<dbReference type="GO" id="GO:0009570">
    <property type="term" value="C:chloroplast stroma"/>
    <property type="evidence" value="ECO:0007005"/>
    <property type="project" value="TAIR"/>
</dbReference>
<dbReference type="GO" id="GO:0009535">
    <property type="term" value="C:chloroplast thylakoid membrane"/>
    <property type="evidence" value="ECO:0000314"/>
    <property type="project" value="TAIR"/>
</dbReference>
<dbReference type="GO" id="GO:0005829">
    <property type="term" value="C:cytosol"/>
    <property type="evidence" value="ECO:0007005"/>
    <property type="project" value="TAIR"/>
</dbReference>
<dbReference type="GO" id="GO:0005739">
    <property type="term" value="C:mitochondrion"/>
    <property type="evidence" value="ECO:0007005"/>
    <property type="project" value="TAIR"/>
</dbReference>
<dbReference type="GO" id="GO:0005634">
    <property type="term" value="C:nucleus"/>
    <property type="evidence" value="ECO:0007005"/>
    <property type="project" value="TAIR"/>
</dbReference>
<dbReference type="GO" id="GO:0098572">
    <property type="term" value="C:stromal side of plastid thylakoid membrane"/>
    <property type="evidence" value="ECO:0000314"/>
    <property type="project" value="UniProtKB"/>
</dbReference>
<dbReference type="GO" id="GO:0048564">
    <property type="term" value="P:photosystem I assembly"/>
    <property type="evidence" value="ECO:0000315"/>
    <property type="project" value="UniProtKB"/>
</dbReference>
<dbReference type="InterPro" id="IPR037736">
    <property type="entry name" value="PSA3"/>
</dbReference>
<dbReference type="PANTHER" id="PTHR36770">
    <property type="entry name" value="PHOTOSYSTEM I ASSEMBLY FACTOR PSA3, CHLOROPLASTIC"/>
    <property type="match status" value="1"/>
</dbReference>
<dbReference type="PANTHER" id="PTHR36770:SF1">
    <property type="entry name" value="PHOTOSYSTEM I ASSEMBLY FACTOR PSA3, CHLOROPLASTIC"/>
    <property type="match status" value="1"/>
</dbReference>
<proteinExistence type="evidence at protein level"/>